<proteinExistence type="inferred from homology"/>
<evidence type="ECO:0000250" key="1"/>
<evidence type="ECO:0000255" key="2">
    <source>
        <dbReference type="PROSITE-ProRule" id="PRU00216"/>
    </source>
</evidence>
<evidence type="ECO:0000305" key="3"/>
<protein>
    <recommendedName>
        <fullName>Putative UV-damage repair protein UvrX</fullName>
    </recommendedName>
</protein>
<sequence length="416" mass="46715">MIDYSQFPRKNILCVDMKSFYASVSAVTMGLNPLTCYLAVVGNTDRQGSVVLAASPALKKDFGIKTGSRLFEIPEDPRIHIVNPQMKLFIRVSTEITKLFYRFVPEKCVHTYSIDESFLDAGKEDPEEMAKAIQSSMWREFGLMCTVGIGDNMLLSKLALDLESKKTKSGIARWRYEDVPNKLWKVRPLSKMWGIGGRMERNLNRMGISTIGQLAKFPLELLEKKFGIMGNQLYYHAHGIDLSEIGAPLMQGQISFGKSQILLRDYTRSEEIKAVLLEICEEVARRARTHNKVGRTISLGIGYSKDELGGGFHRSKTIDLPTSITMDIYRCCLMLFNKFYSGKTVRSVSVTLSNIEDDVNQQLSLFEVDNEKRRKLGFVMDGIRSKYGSKAILRAVSYTPAGTALQRAGLTGGHKS</sequence>
<gene>
    <name type="primary">uvrX</name>
    <name type="ordered locus">BSU21500</name>
</gene>
<comment type="cofactor">
    <cofactor evidence="1">
        <name>Mg(2+)</name>
        <dbReference type="ChEBI" id="CHEBI:18420"/>
    </cofactor>
    <text evidence="1">Binds 2 magnesium ions per subunit.</text>
</comment>
<comment type="similarity">
    <text evidence="3">Belongs to the DNA polymerase type-Y family.</text>
</comment>
<reference key="1">
    <citation type="journal article" date="1998" name="J. Biol. Chem.">
        <title>Identification and characterization of the structural and transporter genes for, and the chemical and biological properties of, sublancin 168, a novel lantibiotic produced by Bacillus subtilis 168.</title>
        <authorList>
            <person name="Paik S.H."/>
            <person name="Chakicherla A."/>
            <person name="Hansen J.N."/>
        </authorList>
    </citation>
    <scope>NUCLEOTIDE SEQUENCE [GENOMIC DNA]</scope>
    <source>
        <strain>168</strain>
    </source>
</reference>
<reference key="2">
    <citation type="journal article" date="1997" name="Nature">
        <title>The complete genome sequence of the Gram-positive bacterium Bacillus subtilis.</title>
        <authorList>
            <person name="Kunst F."/>
            <person name="Ogasawara N."/>
            <person name="Moszer I."/>
            <person name="Albertini A.M."/>
            <person name="Alloni G."/>
            <person name="Azevedo V."/>
            <person name="Bertero M.G."/>
            <person name="Bessieres P."/>
            <person name="Bolotin A."/>
            <person name="Borchert S."/>
            <person name="Borriss R."/>
            <person name="Boursier L."/>
            <person name="Brans A."/>
            <person name="Braun M."/>
            <person name="Brignell S.C."/>
            <person name="Bron S."/>
            <person name="Brouillet S."/>
            <person name="Bruschi C.V."/>
            <person name="Caldwell B."/>
            <person name="Capuano V."/>
            <person name="Carter N.M."/>
            <person name="Choi S.-K."/>
            <person name="Codani J.-J."/>
            <person name="Connerton I.F."/>
            <person name="Cummings N.J."/>
            <person name="Daniel R.A."/>
            <person name="Denizot F."/>
            <person name="Devine K.M."/>
            <person name="Duesterhoeft A."/>
            <person name="Ehrlich S.D."/>
            <person name="Emmerson P.T."/>
            <person name="Entian K.-D."/>
            <person name="Errington J."/>
            <person name="Fabret C."/>
            <person name="Ferrari E."/>
            <person name="Foulger D."/>
            <person name="Fritz C."/>
            <person name="Fujita M."/>
            <person name="Fujita Y."/>
            <person name="Fuma S."/>
            <person name="Galizzi A."/>
            <person name="Galleron N."/>
            <person name="Ghim S.-Y."/>
            <person name="Glaser P."/>
            <person name="Goffeau A."/>
            <person name="Golightly E.J."/>
            <person name="Grandi G."/>
            <person name="Guiseppi G."/>
            <person name="Guy B.J."/>
            <person name="Haga K."/>
            <person name="Haiech J."/>
            <person name="Harwood C.R."/>
            <person name="Henaut A."/>
            <person name="Hilbert H."/>
            <person name="Holsappel S."/>
            <person name="Hosono S."/>
            <person name="Hullo M.-F."/>
            <person name="Itaya M."/>
            <person name="Jones L.-M."/>
            <person name="Joris B."/>
            <person name="Karamata D."/>
            <person name="Kasahara Y."/>
            <person name="Klaerr-Blanchard M."/>
            <person name="Klein C."/>
            <person name="Kobayashi Y."/>
            <person name="Koetter P."/>
            <person name="Koningstein G."/>
            <person name="Krogh S."/>
            <person name="Kumano M."/>
            <person name="Kurita K."/>
            <person name="Lapidus A."/>
            <person name="Lardinois S."/>
            <person name="Lauber J."/>
            <person name="Lazarevic V."/>
            <person name="Lee S.-M."/>
            <person name="Levine A."/>
            <person name="Liu H."/>
            <person name="Masuda S."/>
            <person name="Mauel C."/>
            <person name="Medigue C."/>
            <person name="Medina N."/>
            <person name="Mellado R.P."/>
            <person name="Mizuno M."/>
            <person name="Moestl D."/>
            <person name="Nakai S."/>
            <person name="Noback M."/>
            <person name="Noone D."/>
            <person name="O'Reilly M."/>
            <person name="Ogawa K."/>
            <person name="Ogiwara A."/>
            <person name="Oudega B."/>
            <person name="Park S.-H."/>
            <person name="Parro V."/>
            <person name="Pohl T.M."/>
            <person name="Portetelle D."/>
            <person name="Porwollik S."/>
            <person name="Prescott A.M."/>
            <person name="Presecan E."/>
            <person name="Pujic P."/>
            <person name="Purnelle B."/>
            <person name="Rapoport G."/>
            <person name="Rey M."/>
            <person name="Reynolds S."/>
            <person name="Rieger M."/>
            <person name="Rivolta C."/>
            <person name="Rocha E."/>
            <person name="Roche B."/>
            <person name="Rose M."/>
            <person name="Sadaie Y."/>
            <person name="Sato T."/>
            <person name="Scanlan E."/>
            <person name="Schleich S."/>
            <person name="Schroeter R."/>
            <person name="Scoffone F."/>
            <person name="Sekiguchi J."/>
            <person name="Sekowska A."/>
            <person name="Seror S.J."/>
            <person name="Serror P."/>
            <person name="Shin B.-S."/>
            <person name="Soldo B."/>
            <person name="Sorokin A."/>
            <person name="Tacconi E."/>
            <person name="Takagi T."/>
            <person name="Takahashi H."/>
            <person name="Takemaru K."/>
            <person name="Takeuchi M."/>
            <person name="Tamakoshi A."/>
            <person name="Tanaka T."/>
            <person name="Terpstra P."/>
            <person name="Tognoni A."/>
            <person name="Tosato V."/>
            <person name="Uchiyama S."/>
            <person name="Vandenbol M."/>
            <person name="Vannier F."/>
            <person name="Vassarotti A."/>
            <person name="Viari A."/>
            <person name="Wambutt R."/>
            <person name="Wedler E."/>
            <person name="Wedler H."/>
            <person name="Weitzenegger T."/>
            <person name="Winters P."/>
            <person name="Wipat A."/>
            <person name="Yamamoto H."/>
            <person name="Yamane K."/>
            <person name="Yasumoto K."/>
            <person name="Yata K."/>
            <person name="Yoshida K."/>
            <person name="Yoshikawa H.-F."/>
            <person name="Zumstein E."/>
            <person name="Yoshikawa H."/>
            <person name="Danchin A."/>
        </authorList>
    </citation>
    <scope>NUCLEOTIDE SEQUENCE [LARGE SCALE GENOMIC DNA]</scope>
    <source>
        <strain>168</strain>
    </source>
</reference>
<reference key="3">
    <citation type="journal article" date="2009" name="Microbiology">
        <title>From a consortium sequence to a unified sequence: the Bacillus subtilis 168 reference genome a decade later.</title>
        <authorList>
            <person name="Barbe V."/>
            <person name="Cruveiller S."/>
            <person name="Kunst F."/>
            <person name="Lenoble P."/>
            <person name="Meurice G."/>
            <person name="Sekowska A."/>
            <person name="Vallenet D."/>
            <person name="Wang T."/>
            <person name="Moszer I."/>
            <person name="Medigue C."/>
            <person name="Danchin A."/>
        </authorList>
    </citation>
    <scope>SEQUENCE REVISION TO 45</scope>
</reference>
<accession>O31990</accession>
<accession>O30670</accession>
<dbReference type="EMBL" id="AF014938">
    <property type="protein sequence ID" value="AAC63530.1"/>
    <property type="molecule type" value="Genomic_DNA"/>
</dbReference>
<dbReference type="EMBL" id="AL009126">
    <property type="protein sequence ID" value="CAB14068.2"/>
    <property type="molecule type" value="Genomic_DNA"/>
</dbReference>
<dbReference type="RefSeq" id="NP_390033.2">
    <property type="nucleotide sequence ID" value="NC_000964.3"/>
</dbReference>
<dbReference type="RefSeq" id="WP_010886549.1">
    <property type="nucleotide sequence ID" value="NC_000964.3"/>
</dbReference>
<dbReference type="SMR" id="O31990"/>
<dbReference type="FunCoup" id="O31990">
    <property type="interactions" value="10"/>
</dbReference>
<dbReference type="STRING" id="224308.BSU21500"/>
<dbReference type="PaxDb" id="224308-BSU21500"/>
<dbReference type="EnsemblBacteria" id="CAB14068">
    <property type="protein sequence ID" value="CAB14068"/>
    <property type="gene ID" value="BSU_21500"/>
</dbReference>
<dbReference type="GeneID" id="939122"/>
<dbReference type="KEGG" id="bsu:BSU21500"/>
<dbReference type="PATRIC" id="fig|224308.43.peg.2242"/>
<dbReference type="eggNOG" id="COG0389">
    <property type="taxonomic scope" value="Bacteria"/>
</dbReference>
<dbReference type="InParanoid" id="O31990"/>
<dbReference type="OrthoDB" id="9808813at2"/>
<dbReference type="PhylomeDB" id="O31990"/>
<dbReference type="BioCyc" id="BSUB:BSU21500-MONOMER"/>
<dbReference type="Proteomes" id="UP000001570">
    <property type="component" value="Chromosome"/>
</dbReference>
<dbReference type="GO" id="GO:0003684">
    <property type="term" value="F:damaged DNA binding"/>
    <property type="evidence" value="ECO:0007669"/>
    <property type="project" value="InterPro"/>
</dbReference>
<dbReference type="GO" id="GO:0003887">
    <property type="term" value="F:DNA-directed DNA polymerase activity"/>
    <property type="evidence" value="ECO:0000318"/>
    <property type="project" value="GO_Central"/>
</dbReference>
<dbReference type="GO" id="GO:0046872">
    <property type="term" value="F:metal ion binding"/>
    <property type="evidence" value="ECO:0007669"/>
    <property type="project" value="UniProtKB-KW"/>
</dbReference>
<dbReference type="GO" id="GO:0042276">
    <property type="term" value="P:error-prone translesion synthesis"/>
    <property type="evidence" value="ECO:0000318"/>
    <property type="project" value="GO_Central"/>
</dbReference>
<dbReference type="GO" id="GO:0009432">
    <property type="term" value="P:SOS response"/>
    <property type="evidence" value="ECO:0000318"/>
    <property type="project" value="GO_Central"/>
</dbReference>
<dbReference type="CDD" id="cd01700">
    <property type="entry name" value="PolY_Pol_V_umuC"/>
    <property type="match status" value="1"/>
</dbReference>
<dbReference type="Gene3D" id="3.30.70.270">
    <property type="match status" value="1"/>
</dbReference>
<dbReference type="Gene3D" id="3.40.1170.60">
    <property type="match status" value="1"/>
</dbReference>
<dbReference type="Gene3D" id="1.10.150.20">
    <property type="entry name" value="5' to 3' exonuclease, C-terminal subdomain"/>
    <property type="match status" value="1"/>
</dbReference>
<dbReference type="Gene3D" id="3.30.1490.100">
    <property type="entry name" value="DNA polymerase, Y-family, little finger domain"/>
    <property type="match status" value="1"/>
</dbReference>
<dbReference type="InterPro" id="IPR043502">
    <property type="entry name" value="DNA/RNA_pol_sf"/>
</dbReference>
<dbReference type="InterPro" id="IPR036775">
    <property type="entry name" value="DNA_pol_Y-fam_lit_finger_sf"/>
</dbReference>
<dbReference type="InterPro" id="IPR017961">
    <property type="entry name" value="DNA_pol_Y-fam_little_finger"/>
</dbReference>
<dbReference type="InterPro" id="IPR050116">
    <property type="entry name" value="DNA_polymerase-Y"/>
</dbReference>
<dbReference type="InterPro" id="IPR053848">
    <property type="entry name" value="IMS_HHH_1"/>
</dbReference>
<dbReference type="InterPro" id="IPR043128">
    <property type="entry name" value="Rev_trsase/Diguanyl_cyclase"/>
</dbReference>
<dbReference type="InterPro" id="IPR001126">
    <property type="entry name" value="UmuC"/>
</dbReference>
<dbReference type="PANTHER" id="PTHR11076">
    <property type="entry name" value="DNA REPAIR POLYMERASE UMUC / TRANSFERASE FAMILY MEMBER"/>
    <property type="match status" value="1"/>
</dbReference>
<dbReference type="PANTHER" id="PTHR11076:SF35">
    <property type="entry name" value="DNA REPAIR PROTEIN HOMOLOG YOBH"/>
    <property type="match status" value="1"/>
</dbReference>
<dbReference type="Pfam" id="PF00817">
    <property type="entry name" value="IMS"/>
    <property type="match status" value="1"/>
</dbReference>
<dbReference type="Pfam" id="PF11799">
    <property type="entry name" value="IMS_C"/>
    <property type="match status" value="1"/>
</dbReference>
<dbReference type="Pfam" id="PF21999">
    <property type="entry name" value="IMS_HHH_1"/>
    <property type="match status" value="1"/>
</dbReference>
<dbReference type="SUPFAM" id="SSF56672">
    <property type="entry name" value="DNA/RNA polymerases"/>
    <property type="match status" value="1"/>
</dbReference>
<dbReference type="SUPFAM" id="SSF100879">
    <property type="entry name" value="Lesion bypass DNA polymerase (Y-family), little finger domain"/>
    <property type="match status" value="1"/>
</dbReference>
<dbReference type="PROSITE" id="PS50173">
    <property type="entry name" value="UMUC"/>
    <property type="match status" value="1"/>
</dbReference>
<name>UVRX_BACSU</name>
<organism>
    <name type="scientific">Bacillus subtilis (strain 168)</name>
    <dbReference type="NCBI Taxonomy" id="224308"/>
    <lineage>
        <taxon>Bacteria</taxon>
        <taxon>Bacillati</taxon>
        <taxon>Bacillota</taxon>
        <taxon>Bacilli</taxon>
        <taxon>Bacillales</taxon>
        <taxon>Bacillaceae</taxon>
        <taxon>Bacillus</taxon>
    </lineage>
</organism>
<feature type="chain" id="PRO_0000382682" description="Putative UV-damage repair protein UvrX">
    <location>
        <begin position="1"/>
        <end position="416"/>
    </location>
</feature>
<feature type="domain" description="UmuC" evidence="2">
    <location>
        <begin position="12"/>
        <end position="196"/>
    </location>
</feature>
<feature type="active site" evidence="2">
    <location>
        <position position="116"/>
    </location>
</feature>
<feature type="binding site" evidence="2">
    <location>
        <position position="16"/>
    </location>
    <ligand>
        <name>Mg(2+)</name>
        <dbReference type="ChEBI" id="CHEBI:18420"/>
    </ligand>
</feature>
<feature type="binding site" evidence="2">
    <location>
        <position position="115"/>
    </location>
    <ligand>
        <name>Mg(2+)</name>
        <dbReference type="ChEBI" id="CHEBI:18420"/>
    </ligand>
</feature>
<keyword id="KW-0227">DNA damage</keyword>
<keyword id="KW-0234">DNA repair</keyword>
<keyword id="KW-0238">DNA-binding</keyword>
<keyword id="KW-0460">Magnesium</keyword>
<keyword id="KW-0479">Metal-binding</keyword>
<keyword id="KW-0548">Nucleotidyltransferase</keyword>
<keyword id="KW-1185">Reference proteome</keyword>
<keyword id="KW-0808">Transferase</keyword>